<sequence length="109" mass="12643">MSAQPVDIQVFGRSLRVNCPPEQQDALNMAAEDLSQRLQDLKVRTRVNNTEQLVFIAALNVCHELAQERLKTRDYASNMEQRIRMLQQTIEQALLEQGRISDRQDTQFE</sequence>
<keyword id="KW-0131">Cell cycle</keyword>
<keyword id="KW-0132">Cell division</keyword>
<keyword id="KW-0175">Coiled coil</keyword>
<keyword id="KW-0963">Cytoplasm</keyword>
<keyword id="KW-0717">Septation</keyword>
<dbReference type="EMBL" id="CP000720">
    <property type="protein sequence ID" value="ABS45968.1"/>
    <property type="molecule type" value="Genomic_DNA"/>
</dbReference>
<dbReference type="RefSeq" id="WP_002209954.1">
    <property type="nucleotide sequence ID" value="NC_009708.1"/>
</dbReference>
<dbReference type="SMR" id="A7FF14"/>
<dbReference type="GeneID" id="96662508"/>
<dbReference type="KEGG" id="ypi:YpsIP31758_0858"/>
<dbReference type="HOGENOM" id="CLU_116623_3_0_6"/>
<dbReference type="Proteomes" id="UP000002412">
    <property type="component" value="Chromosome"/>
</dbReference>
<dbReference type="GO" id="GO:0032153">
    <property type="term" value="C:cell division site"/>
    <property type="evidence" value="ECO:0007669"/>
    <property type="project" value="TreeGrafter"/>
</dbReference>
<dbReference type="GO" id="GO:0030428">
    <property type="term" value="C:cell septum"/>
    <property type="evidence" value="ECO:0007669"/>
    <property type="project" value="TreeGrafter"/>
</dbReference>
<dbReference type="GO" id="GO:0005829">
    <property type="term" value="C:cytosol"/>
    <property type="evidence" value="ECO:0007669"/>
    <property type="project" value="TreeGrafter"/>
</dbReference>
<dbReference type="GO" id="GO:0005886">
    <property type="term" value="C:plasma membrane"/>
    <property type="evidence" value="ECO:0007669"/>
    <property type="project" value="UniProtKB-UniRule"/>
</dbReference>
<dbReference type="GO" id="GO:0000917">
    <property type="term" value="P:division septum assembly"/>
    <property type="evidence" value="ECO:0007669"/>
    <property type="project" value="UniProtKB-KW"/>
</dbReference>
<dbReference type="GO" id="GO:0043093">
    <property type="term" value="P:FtsZ-dependent cytokinesis"/>
    <property type="evidence" value="ECO:0007669"/>
    <property type="project" value="TreeGrafter"/>
</dbReference>
<dbReference type="GO" id="GO:0000921">
    <property type="term" value="P:septin ring assembly"/>
    <property type="evidence" value="ECO:0007669"/>
    <property type="project" value="TreeGrafter"/>
</dbReference>
<dbReference type="FunFam" id="1.20.5.50:FF:000001">
    <property type="entry name" value="Cell division protein ZapA"/>
    <property type="match status" value="1"/>
</dbReference>
<dbReference type="FunFam" id="3.30.160.880:FF:000001">
    <property type="entry name" value="Cell division protein ZapA"/>
    <property type="match status" value="1"/>
</dbReference>
<dbReference type="Gene3D" id="1.20.5.50">
    <property type="match status" value="1"/>
</dbReference>
<dbReference type="Gene3D" id="3.30.160.880">
    <property type="entry name" value="Cell division protein ZapA protomer, N-terminal domain"/>
    <property type="match status" value="1"/>
</dbReference>
<dbReference type="HAMAP" id="MF_02012">
    <property type="entry name" value="ZapA_type1"/>
    <property type="match status" value="1"/>
</dbReference>
<dbReference type="InterPro" id="IPR007838">
    <property type="entry name" value="Cell_div_ZapA-like"/>
</dbReference>
<dbReference type="InterPro" id="IPR036192">
    <property type="entry name" value="Cell_div_ZapA-like_sf"/>
</dbReference>
<dbReference type="InterPro" id="IPR023771">
    <property type="entry name" value="Cell_div_ZapA_eubact"/>
</dbReference>
<dbReference type="InterPro" id="IPR042233">
    <property type="entry name" value="Cell_div_ZapA_N"/>
</dbReference>
<dbReference type="NCBIfam" id="NF008209">
    <property type="entry name" value="PRK10972.1"/>
    <property type="match status" value="1"/>
</dbReference>
<dbReference type="PANTHER" id="PTHR34981">
    <property type="entry name" value="CELL DIVISION PROTEIN ZAPA"/>
    <property type="match status" value="1"/>
</dbReference>
<dbReference type="PANTHER" id="PTHR34981:SF1">
    <property type="entry name" value="CELL DIVISION PROTEIN ZAPA"/>
    <property type="match status" value="1"/>
</dbReference>
<dbReference type="Pfam" id="PF05164">
    <property type="entry name" value="ZapA"/>
    <property type="match status" value="1"/>
</dbReference>
<dbReference type="SUPFAM" id="SSF102829">
    <property type="entry name" value="Cell division protein ZapA-like"/>
    <property type="match status" value="1"/>
</dbReference>
<feature type="chain" id="PRO_0000345672" description="Cell division protein ZapA">
    <location>
        <begin position="1"/>
        <end position="109"/>
    </location>
</feature>
<feature type="coiled-coil region" evidence="1">
    <location>
        <begin position="22"/>
        <end position="99"/>
    </location>
</feature>
<comment type="function">
    <text evidence="1">Activator of cell division through the inhibition of FtsZ GTPase activity, therefore promoting FtsZ assembly into bundles of protofilaments necessary for the formation of the division Z ring. It is recruited early at mid-cell but it is not essential for cell division.</text>
</comment>
<comment type="subunit">
    <text evidence="1">Homodimer. Interacts with FtsZ.</text>
</comment>
<comment type="subcellular location">
    <subcellularLocation>
        <location evidence="1">Cytoplasm</location>
    </subcellularLocation>
    <text evidence="1">Localizes at mid-cell.</text>
</comment>
<comment type="similarity">
    <text evidence="1">Belongs to the ZapA family. Type 1 subfamily.</text>
</comment>
<reference key="1">
    <citation type="journal article" date="2007" name="PLoS Genet.">
        <title>The complete genome sequence of Yersinia pseudotuberculosis IP31758, the causative agent of Far East scarlet-like fever.</title>
        <authorList>
            <person name="Eppinger M."/>
            <person name="Rosovitz M.J."/>
            <person name="Fricke W.F."/>
            <person name="Rasko D.A."/>
            <person name="Kokorina G."/>
            <person name="Fayolle C."/>
            <person name="Lindler L.E."/>
            <person name="Carniel E."/>
            <person name="Ravel J."/>
        </authorList>
    </citation>
    <scope>NUCLEOTIDE SEQUENCE [LARGE SCALE GENOMIC DNA]</scope>
    <source>
        <strain>IP 31758</strain>
    </source>
</reference>
<gene>
    <name evidence="1" type="primary">zapA</name>
    <name type="ordered locus">YpsIP31758_0858</name>
</gene>
<protein>
    <recommendedName>
        <fullName evidence="1">Cell division protein ZapA</fullName>
    </recommendedName>
    <alternativeName>
        <fullName evidence="1">Z ring-associated protein ZapA</fullName>
    </alternativeName>
</protein>
<name>ZAPA_YERP3</name>
<evidence type="ECO:0000255" key="1">
    <source>
        <dbReference type="HAMAP-Rule" id="MF_02012"/>
    </source>
</evidence>
<proteinExistence type="inferred from homology"/>
<accession>A7FF14</accession>
<organism>
    <name type="scientific">Yersinia pseudotuberculosis serotype O:1b (strain IP 31758)</name>
    <dbReference type="NCBI Taxonomy" id="349747"/>
    <lineage>
        <taxon>Bacteria</taxon>
        <taxon>Pseudomonadati</taxon>
        <taxon>Pseudomonadota</taxon>
        <taxon>Gammaproteobacteria</taxon>
        <taxon>Enterobacterales</taxon>
        <taxon>Yersiniaceae</taxon>
        <taxon>Yersinia</taxon>
    </lineage>
</organism>